<feature type="chain" id="PRO_1000133225" description="Met repressor">
    <location>
        <begin position="1"/>
        <end position="105"/>
    </location>
</feature>
<protein>
    <recommendedName>
        <fullName evidence="1">Met repressor</fullName>
    </recommendedName>
    <alternativeName>
        <fullName evidence="1">Met regulon regulatory protein MetJ</fullName>
    </alternativeName>
</protein>
<comment type="function">
    <text evidence="1">This regulatory protein, when combined with SAM (S-adenosylmethionine) represses the expression of the methionine regulon and of enzymes involved in SAM synthesis.</text>
</comment>
<comment type="subunit">
    <text evidence="1">Homodimer.</text>
</comment>
<comment type="subcellular location">
    <subcellularLocation>
        <location evidence="1">Cytoplasm</location>
    </subcellularLocation>
</comment>
<comment type="domain">
    <text>Does not bind DNA by a helix-turn-helix motif.</text>
</comment>
<comment type="similarity">
    <text evidence="1">Belongs to the MetJ family.</text>
</comment>
<keyword id="KW-0028">Amino-acid biosynthesis</keyword>
<keyword id="KW-0963">Cytoplasm</keyword>
<keyword id="KW-0238">DNA-binding</keyword>
<keyword id="KW-0486">Methionine biosynthesis</keyword>
<keyword id="KW-0678">Repressor</keyword>
<keyword id="KW-0804">Transcription</keyword>
<keyword id="KW-0805">Transcription regulation</keyword>
<proteinExistence type="inferred from homology"/>
<reference key="1">
    <citation type="journal article" date="2010" name="J. Bacteriol.">
        <title>Genome sequence of the deep-rooted Yersinia pestis strain Angola reveals new insights into the evolution and pangenome of the plague bacterium.</title>
        <authorList>
            <person name="Eppinger M."/>
            <person name="Worsham P.L."/>
            <person name="Nikolich M.P."/>
            <person name="Riley D.R."/>
            <person name="Sebastian Y."/>
            <person name="Mou S."/>
            <person name="Achtman M."/>
            <person name="Lindler L.E."/>
            <person name="Ravel J."/>
        </authorList>
    </citation>
    <scope>NUCLEOTIDE SEQUENCE [LARGE SCALE GENOMIC DNA]</scope>
    <source>
        <strain>Angola</strain>
    </source>
</reference>
<gene>
    <name evidence="1" type="primary">metJ</name>
    <name type="ordered locus">YpAngola_A3808</name>
</gene>
<accession>A9R4I4</accession>
<dbReference type="EMBL" id="CP000901">
    <property type="protein sequence ID" value="ABX88578.1"/>
    <property type="molecule type" value="Genomic_DNA"/>
</dbReference>
<dbReference type="RefSeq" id="WP_002208935.1">
    <property type="nucleotide sequence ID" value="NZ_CP009935.1"/>
</dbReference>
<dbReference type="SMR" id="A9R4I4"/>
<dbReference type="GeneID" id="57974482"/>
<dbReference type="KEGG" id="ypg:YpAngola_A3808"/>
<dbReference type="PATRIC" id="fig|349746.12.peg.523"/>
<dbReference type="GO" id="GO:0005737">
    <property type="term" value="C:cytoplasm"/>
    <property type="evidence" value="ECO:0007669"/>
    <property type="project" value="UniProtKB-SubCell"/>
</dbReference>
<dbReference type="GO" id="GO:0003677">
    <property type="term" value="F:DNA binding"/>
    <property type="evidence" value="ECO:0007669"/>
    <property type="project" value="UniProtKB-KW"/>
</dbReference>
<dbReference type="GO" id="GO:0003700">
    <property type="term" value="F:DNA-binding transcription factor activity"/>
    <property type="evidence" value="ECO:0007669"/>
    <property type="project" value="InterPro"/>
</dbReference>
<dbReference type="GO" id="GO:0009086">
    <property type="term" value="P:methionine biosynthetic process"/>
    <property type="evidence" value="ECO:0007669"/>
    <property type="project" value="UniProtKB-UniRule"/>
</dbReference>
<dbReference type="GO" id="GO:0045892">
    <property type="term" value="P:negative regulation of DNA-templated transcription"/>
    <property type="evidence" value="ECO:0007669"/>
    <property type="project" value="UniProtKB-UniRule"/>
</dbReference>
<dbReference type="CDD" id="cd00490">
    <property type="entry name" value="Met_repressor_MetJ"/>
    <property type="match status" value="1"/>
</dbReference>
<dbReference type="FunFam" id="1.10.140.10:FF:000001">
    <property type="entry name" value="Met repressor"/>
    <property type="match status" value="1"/>
</dbReference>
<dbReference type="Gene3D" id="1.10.140.10">
    <property type="entry name" value="MET Apo-Repressor, subunit A"/>
    <property type="match status" value="1"/>
</dbReference>
<dbReference type="HAMAP" id="MF_00744">
    <property type="entry name" value="MetJ"/>
    <property type="match status" value="1"/>
</dbReference>
<dbReference type="InterPro" id="IPR002084">
    <property type="entry name" value="Met_repressor_MetJ"/>
</dbReference>
<dbReference type="InterPro" id="IPR023453">
    <property type="entry name" value="Met_repressor_MetJ_dom_sf"/>
</dbReference>
<dbReference type="InterPro" id="IPR010985">
    <property type="entry name" value="Ribbon_hlx_hlx"/>
</dbReference>
<dbReference type="NCBIfam" id="NF003622">
    <property type="entry name" value="PRK05264.1"/>
    <property type="match status" value="1"/>
</dbReference>
<dbReference type="Pfam" id="PF01340">
    <property type="entry name" value="MetJ"/>
    <property type="match status" value="1"/>
</dbReference>
<dbReference type="SUPFAM" id="SSF47598">
    <property type="entry name" value="Ribbon-helix-helix"/>
    <property type="match status" value="1"/>
</dbReference>
<evidence type="ECO:0000255" key="1">
    <source>
        <dbReference type="HAMAP-Rule" id="MF_00744"/>
    </source>
</evidence>
<organism>
    <name type="scientific">Yersinia pestis bv. Antiqua (strain Angola)</name>
    <dbReference type="NCBI Taxonomy" id="349746"/>
    <lineage>
        <taxon>Bacteria</taxon>
        <taxon>Pseudomonadati</taxon>
        <taxon>Pseudomonadota</taxon>
        <taxon>Gammaproteobacteria</taxon>
        <taxon>Enterobacterales</taxon>
        <taxon>Yersiniaceae</taxon>
        <taxon>Yersinia</taxon>
    </lineage>
</organism>
<sequence length="105" mass="12149">MAEWNGEYVSPYAEHGKKSKQVKKITVSIPLKVLKILTDERTRRQVNNLRHATNSELLCEAFLHAFTGQPLPNDEDLRKERSDEIPEAAKILMRELGVDPDTWEY</sequence>
<name>METJ_YERPG</name>